<sequence length="371" mass="41815">MEYDAYNDSGIYDDEYSDGFGYFVDLEEASPWEAKVAPVFLVVIYSLVCFLGLLGNGLVIVIATFKMKKTVNTVWFVNLAVADFLFNIFLPMHITYAAMDYHWVFGKAMCKISNFLLSHNMYTSVFLLTVISFDRCISVLLPVWSQNHRSIRLAYMTCSAVWVLAFFLSSPSLVFRDTANIHGKITCFNNFSLAAPESSPHPAHSQVVSTGYSRHVAVTVTRFLCGFLIPVFIITACYLTIVFKLQRNRLAKNKKPFKIIITIIITFFLCWCPYHTLYLLELHHTAVPSSVFSLGLPLATAVAIANSCMNPILYVFMGHDFRKFKVALFSRLANALSEDTGPSSYPSHRSFTKMSSLNEKASVNEKETSTL</sequence>
<feature type="chain" id="PRO_0000069308" description="Chemerin-like receptor 1">
    <location>
        <begin position="1"/>
        <end position="371"/>
    </location>
</feature>
<feature type="topological domain" description="Extracellular" evidence="3">
    <location>
        <begin position="1"/>
        <end position="39"/>
    </location>
</feature>
<feature type="transmembrane region" description="Helical; Name=1" evidence="3">
    <location>
        <begin position="40"/>
        <end position="62"/>
    </location>
</feature>
<feature type="topological domain" description="Cytoplasmic" evidence="3">
    <location>
        <begin position="63"/>
        <end position="73"/>
    </location>
</feature>
<feature type="transmembrane region" description="Helical; Name=2" evidence="3">
    <location>
        <begin position="74"/>
        <end position="95"/>
    </location>
</feature>
<feature type="topological domain" description="Extracellular" evidence="3">
    <location>
        <begin position="96"/>
        <end position="112"/>
    </location>
</feature>
<feature type="transmembrane region" description="Helical; Name=3" evidence="3">
    <location>
        <begin position="113"/>
        <end position="133"/>
    </location>
</feature>
<feature type="topological domain" description="Cytoplasmic" evidence="3">
    <location>
        <begin position="134"/>
        <end position="152"/>
    </location>
</feature>
<feature type="transmembrane region" description="Helical; Name=4" evidence="3">
    <location>
        <begin position="153"/>
        <end position="174"/>
    </location>
</feature>
<feature type="topological domain" description="Extracellular" evidence="3">
    <location>
        <begin position="175"/>
        <end position="222"/>
    </location>
</feature>
<feature type="transmembrane region" description="Helical; Name=5" evidence="3">
    <location>
        <begin position="223"/>
        <end position="243"/>
    </location>
</feature>
<feature type="topological domain" description="Cytoplasmic" evidence="3">
    <location>
        <begin position="244"/>
        <end position="259"/>
    </location>
</feature>
<feature type="transmembrane region" description="Helical; Name=6" evidence="3">
    <location>
        <begin position="260"/>
        <end position="280"/>
    </location>
</feature>
<feature type="topological domain" description="Extracellular" evidence="3">
    <location>
        <begin position="281"/>
        <end position="298"/>
    </location>
</feature>
<feature type="transmembrane region" description="Helical; Name=7" evidence="3">
    <location>
        <begin position="299"/>
        <end position="318"/>
    </location>
</feature>
<feature type="topological domain" description="Cytoplasmic" evidence="3">
    <location>
        <begin position="319"/>
        <end position="371"/>
    </location>
</feature>
<feature type="modified residue" description="Phosphoserine" evidence="13">
    <location>
        <position position="337"/>
    </location>
</feature>
<feature type="modified residue" description="Phosphothreonine" evidence="13">
    <location>
        <position position="340"/>
    </location>
</feature>
<feature type="modified residue" description="Phosphoserine" evidence="13">
    <location>
        <position position="347"/>
    </location>
</feature>
<feature type="modified residue" description="Phosphoserine" evidence="13">
    <location>
        <position position="350"/>
    </location>
</feature>
<feature type="modified residue" description="Phosphoserine" evidence="2">
    <location>
        <position position="356"/>
    </location>
</feature>
<feature type="modified residue" description="Phosphothreonine" evidence="13">
    <location>
        <position position="370"/>
    </location>
</feature>
<feature type="glycosylation site" description="N-linked (GlcNAc...) asparagine" evidence="3">
    <location>
        <position position="7"/>
    </location>
</feature>
<feature type="glycosylation site" description="N-linked (GlcNAc...) asparagine" evidence="3">
    <location>
        <position position="190"/>
    </location>
</feature>
<feature type="disulfide bond" evidence="4">
    <location>
        <begin position="110"/>
        <end position="187"/>
    </location>
</feature>
<dbReference type="EMBL" id="U79525">
    <property type="protein sequence ID" value="AAB53789.1"/>
    <property type="molecule type" value="mRNA"/>
</dbReference>
<dbReference type="CCDS" id="CCDS19551.1"/>
<dbReference type="PIR" id="JC5498">
    <property type="entry name" value="JC5498"/>
</dbReference>
<dbReference type="RefSeq" id="NP_001345989.1">
    <property type="nucleotide sequence ID" value="NM_001359060.1"/>
</dbReference>
<dbReference type="RefSeq" id="NP_032179.1">
    <property type="nucleotide sequence ID" value="NM_008153.3"/>
</dbReference>
<dbReference type="RefSeq" id="XP_006530227.1">
    <property type="nucleotide sequence ID" value="XM_006530164.5"/>
</dbReference>
<dbReference type="RefSeq" id="XP_006530228.1">
    <property type="nucleotide sequence ID" value="XM_006530165.4"/>
</dbReference>
<dbReference type="RefSeq" id="XP_006530229.1">
    <property type="nucleotide sequence ID" value="XM_006530166.3"/>
</dbReference>
<dbReference type="RefSeq" id="XP_036020688.1">
    <property type="nucleotide sequence ID" value="XM_036164795.1"/>
</dbReference>
<dbReference type="SMR" id="P97468"/>
<dbReference type="FunCoup" id="P97468">
    <property type="interactions" value="1060"/>
</dbReference>
<dbReference type="STRING" id="10090.ENSMUSP00000036316"/>
<dbReference type="BindingDB" id="P97468"/>
<dbReference type="ChEMBL" id="CHEMBL4523269"/>
<dbReference type="GlyCosmos" id="P97468">
    <property type="glycosylation" value="2 sites, No reported glycans"/>
</dbReference>
<dbReference type="GlyGen" id="P97468">
    <property type="glycosylation" value="3 sites"/>
</dbReference>
<dbReference type="iPTMnet" id="P97468"/>
<dbReference type="PhosphoSitePlus" id="P97468"/>
<dbReference type="jPOST" id="P97468"/>
<dbReference type="PaxDb" id="10090-ENSMUSP00000036316"/>
<dbReference type="ProteomicsDB" id="283637"/>
<dbReference type="Antibodypedia" id="9299">
    <property type="antibodies" value="558 antibodies from 36 providers"/>
</dbReference>
<dbReference type="DNASU" id="14747"/>
<dbReference type="Ensembl" id="ENSMUST00000047936.13">
    <property type="protein sequence ID" value="ENSMUSP00000036316.7"/>
    <property type="gene ID" value="ENSMUSG00000042190.13"/>
</dbReference>
<dbReference type="GeneID" id="14747"/>
<dbReference type="KEGG" id="mmu:14747"/>
<dbReference type="UCSC" id="uc012ebo.1">
    <property type="organism name" value="mouse"/>
</dbReference>
<dbReference type="AGR" id="MGI:109603"/>
<dbReference type="CTD" id="1240"/>
<dbReference type="MGI" id="MGI:109603">
    <property type="gene designation" value="Cmklr1"/>
</dbReference>
<dbReference type="VEuPathDB" id="HostDB:ENSMUSG00000042190"/>
<dbReference type="eggNOG" id="KOG3656">
    <property type="taxonomic scope" value="Eukaryota"/>
</dbReference>
<dbReference type="GeneTree" id="ENSGT01020000230438"/>
<dbReference type="HOGENOM" id="CLU_009579_8_0_1"/>
<dbReference type="InParanoid" id="P97468"/>
<dbReference type="OMA" id="IIMSCPS"/>
<dbReference type="OrthoDB" id="6088892at2759"/>
<dbReference type="PhylomeDB" id="P97468"/>
<dbReference type="TreeFam" id="TF330976"/>
<dbReference type="Reactome" id="R-MMU-373076">
    <property type="pathway name" value="Class A/1 (Rhodopsin-like receptors)"/>
</dbReference>
<dbReference type="BioGRID-ORCS" id="14747">
    <property type="hits" value="1 hit in 79 CRISPR screens"/>
</dbReference>
<dbReference type="ChiTaRS" id="Cmklr1">
    <property type="organism name" value="mouse"/>
</dbReference>
<dbReference type="PRO" id="PR:P97468"/>
<dbReference type="Proteomes" id="UP000000589">
    <property type="component" value="Chromosome 5"/>
</dbReference>
<dbReference type="RNAct" id="P97468">
    <property type="molecule type" value="protein"/>
</dbReference>
<dbReference type="Bgee" id="ENSMUSG00000042190">
    <property type="expression patterns" value="Expressed in epididymal fat pad and 144 other cell types or tissues"/>
</dbReference>
<dbReference type="ExpressionAtlas" id="P97468">
    <property type="expression patterns" value="baseline and differential"/>
</dbReference>
<dbReference type="GO" id="GO:0005886">
    <property type="term" value="C:plasma membrane"/>
    <property type="evidence" value="ECO:0000250"/>
    <property type="project" value="UniProtKB"/>
</dbReference>
<dbReference type="GO" id="GO:0097004">
    <property type="term" value="F:adipokinetic hormone binding"/>
    <property type="evidence" value="ECO:0000250"/>
    <property type="project" value="UniProtKB"/>
</dbReference>
<dbReference type="GO" id="GO:0097003">
    <property type="term" value="F:adipokinetic hormone receptor activity"/>
    <property type="evidence" value="ECO:0000250"/>
    <property type="project" value="UniProtKB"/>
</dbReference>
<dbReference type="GO" id="GO:0004930">
    <property type="term" value="F:G protein-coupled receptor activity"/>
    <property type="evidence" value="ECO:0007669"/>
    <property type="project" value="UniProtKB-KW"/>
</dbReference>
<dbReference type="GO" id="GO:0006935">
    <property type="term" value="P:chemotaxis"/>
    <property type="evidence" value="ECO:0007669"/>
    <property type="project" value="Ensembl"/>
</dbReference>
<dbReference type="GO" id="GO:0007186">
    <property type="term" value="P:G protein-coupled receptor signaling pathway"/>
    <property type="evidence" value="ECO:0000250"/>
    <property type="project" value="UniProtKB"/>
</dbReference>
<dbReference type="GO" id="GO:0032695">
    <property type="term" value="P:negative regulation of interleukin-12 production"/>
    <property type="evidence" value="ECO:0000315"/>
    <property type="project" value="UniProtKB"/>
</dbReference>
<dbReference type="GO" id="GO:0032088">
    <property type="term" value="P:negative regulation of NF-kappaB transcription factor activity"/>
    <property type="evidence" value="ECO:0000250"/>
    <property type="project" value="UniProtKB"/>
</dbReference>
<dbReference type="GO" id="GO:0120162">
    <property type="term" value="P:positive regulation of cold-induced thermogenesis"/>
    <property type="evidence" value="ECO:0000315"/>
    <property type="project" value="YuBioLab"/>
</dbReference>
<dbReference type="GO" id="GO:0045600">
    <property type="term" value="P:positive regulation of fat cell differentiation"/>
    <property type="evidence" value="ECO:0000315"/>
    <property type="project" value="UniProtKB"/>
</dbReference>
<dbReference type="GO" id="GO:0010759">
    <property type="term" value="P:positive regulation of macrophage chemotaxis"/>
    <property type="evidence" value="ECO:0007669"/>
    <property type="project" value="Ensembl"/>
</dbReference>
<dbReference type="GO" id="GO:0050848">
    <property type="term" value="P:regulation of calcium-mediated signaling"/>
    <property type="evidence" value="ECO:0007669"/>
    <property type="project" value="Ensembl"/>
</dbReference>
<dbReference type="CDD" id="cd15116">
    <property type="entry name" value="7tmA_CMKLR1"/>
    <property type="match status" value="1"/>
</dbReference>
<dbReference type="FunFam" id="1.20.1070.10:FF:000034">
    <property type="entry name" value="G-protein coupled receptor 1"/>
    <property type="match status" value="1"/>
</dbReference>
<dbReference type="Gene3D" id="1.20.1070.10">
    <property type="entry name" value="Rhodopsin 7-helix transmembrane proteins"/>
    <property type="match status" value="1"/>
</dbReference>
<dbReference type="InterPro" id="IPR002258">
    <property type="entry name" value="CML1"/>
</dbReference>
<dbReference type="InterPro" id="IPR000826">
    <property type="entry name" value="Formyl_rcpt-rel"/>
</dbReference>
<dbReference type="InterPro" id="IPR000276">
    <property type="entry name" value="GPCR_Rhodpsn"/>
</dbReference>
<dbReference type="InterPro" id="IPR017452">
    <property type="entry name" value="GPCR_Rhodpsn_7TM"/>
</dbReference>
<dbReference type="PANTHER" id="PTHR24225:SF49">
    <property type="entry name" value="CHEMERIN-LIKE RECEPTOR 1"/>
    <property type="match status" value="1"/>
</dbReference>
<dbReference type="PANTHER" id="PTHR24225">
    <property type="entry name" value="CHEMOTACTIC RECEPTOR"/>
    <property type="match status" value="1"/>
</dbReference>
<dbReference type="Pfam" id="PF00001">
    <property type="entry name" value="7tm_1"/>
    <property type="match status" value="1"/>
</dbReference>
<dbReference type="PRINTS" id="PR01126">
    <property type="entry name" value="DEZORPHANR"/>
</dbReference>
<dbReference type="PRINTS" id="PR00237">
    <property type="entry name" value="GPCRRHODOPSN"/>
</dbReference>
<dbReference type="SUPFAM" id="SSF81321">
    <property type="entry name" value="Family A G protein-coupled receptor-like"/>
    <property type="match status" value="1"/>
</dbReference>
<dbReference type="PROSITE" id="PS00237">
    <property type="entry name" value="G_PROTEIN_RECEP_F1_1"/>
    <property type="match status" value="1"/>
</dbReference>
<dbReference type="PROSITE" id="PS50262">
    <property type="entry name" value="G_PROTEIN_RECEP_F1_2"/>
    <property type="match status" value="1"/>
</dbReference>
<keyword id="KW-1003">Cell membrane</keyword>
<keyword id="KW-1015">Disulfide bond</keyword>
<keyword id="KW-0297">G-protein coupled receptor</keyword>
<keyword id="KW-0325">Glycoprotein</keyword>
<keyword id="KW-0472">Membrane</keyword>
<keyword id="KW-0597">Phosphoprotein</keyword>
<keyword id="KW-0675">Receptor</keyword>
<keyword id="KW-1185">Reference proteome</keyword>
<keyword id="KW-0807">Transducer</keyword>
<keyword id="KW-0812">Transmembrane</keyword>
<keyword id="KW-1133">Transmembrane helix</keyword>
<gene>
    <name type="primary">Cmklr1</name>
    <name type="synonym">Dez</name>
    <name type="synonym">Gpcr27</name>
</gene>
<comment type="function">
    <text evidence="1 5 6 7">Receptor for the chemoattractant adipokine chemerin/RARRES2 and for the omega-3 fatty acid derived molecule resolvin E1. Interaction with RARRES2 initiates activation of G proteins G(i)/G(o) and beta-arrestin pathways inducing cellular responses via second messenger pathways such as intracellular calcium mobilization, phosphorylation of MAP kinases MAPK1/MAPK3 (ERK1/2), TYRO3, MAPK14/P38MAPK and PI3K leading to multifunctional effects, like, reduction of immune responses, enhancing of adipogenesis and angionesis. Resolvin E1 down-regulates cytokine production in macrophages by reducing the activation of MAPK1/3 (ERK1/2) and NF-kappa-B (By similarity). Positively regulates adipogenesis and adipocyte metabolism.</text>
</comment>
<comment type="subcellular location">
    <subcellularLocation>
        <location evidence="6">Cell membrane</location>
        <topology evidence="3">Multi-pass membrane protein</topology>
    </subcellularLocation>
</comment>
<comment type="tissue specificity">
    <text evidence="6 7 8 9 10">Expressed in the differentiated adipocytes (at protein level). Ubiquitous. Highly expressed in adipose tissue and immature plasmacytoid dendritic cells (DCs) and at lower levels in myeloid DCs, macrophages, and NK cells. Expressed on macrophages isolated from different tissues, including peritoneal cavities, pleural cavities and spleen.</text>
</comment>
<comment type="developmental stage">
    <text evidence="11">Expressed during bone development and in adult parathyroid glands. Expressed at 11 dpc in the caudal part of the tongue and the umbilical cord and the expression in the tongue was maintained throughout adulthood. Expression increases in bone and cartilaginous forming zones of embryo up to stage 14.5 dpc and at 16.5 dpc expression is seen in the lung.</text>
</comment>
<comment type="induction">
    <text evidence="6">Down-regulated by bacterial lipopolysaccharide (LPS), IFN-alpha and TNF on macrophages.</text>
</comment>
<comment type="similarity">
    <text evidence="12">Belongs to the chemokine-like receptor (CMKLR) family.</text>
</comment>
<reference key="1">
    <citation type="journal article" date="1997" name="Biochem. Biophys. Res. Commun.">
        <title>A novel G protein-coupled receptor with homology to neuropeptide and chemoattractant receptors expressed during bone development.</title>
        <authorList>
            <person name="Methner A."/>
            <person name="Hermey G."/>
            <person name="Schinke B."/>
            <person name="Hermans-Borgmeyer I."/>
        </authorList>
    </citation>
    <scope>NUCLEOTIDE SEQUENCE [MRNA]</scope>
    <scope>DEVELOPMENTAL STAGE</scope>
    <source>
        <tissue>Brain</tissue>
    </source>
</reference>
<reference key="2">
    <citation type="journal article" date="2005" name="J. Exp. Med.">
        <title>Stereochemical assignment, antiinflammatory properties, and receptor for the omega-3 lipid mediator resolvin E1.</title>
        <authorList>
            <person name="Arita M."/>
            <person name="Bianchini F."/>
            <person name="Aliberti J."/>
            <person name="Sher A."/>
            <person name="Chiang N."/>
            <person name="Hong S."/>
            <person name="Yang R."/>
            <person name="Petasis N.A."/>
            <person name="Serhan C.N."/>
        </authorList>
    </citation>
    <scope>LIGAND-BINDING</scope>
    <scope>FUNCTION</scope>
</reference>
<reference key="3">
    <citation type="journal article" date="2006" name="Exp. Hematol.">
        <title>Chemokine-like receptor 1 expression by macrophages in vivo: regulation by TGF-beta and TLR ligands.</title>
        <authorList>
            <person name="Zabel B.A."/>
            <person name="Ohyama T."/>
            <person name="Zuniga L."/>
            <person name="Kim J.Y."/>
            <person name="Johnston B."/>
            <person name="Allen S.J."/>
            <person name="Guido D.G."/>
            <person name="Handel T.M."/>
            <person name="Butcher E.C."/>
        </authorList>
    </citation>
    <scope>FUNCTION</scope>
    <scope>INDUCTION</scope>
    <scope>SUBCELLULAR LOCATION</scope>
    <scope>TISSUE SPECIFICITY</scope>
</reference>
<reference key="4">
    <citation type="journal article" date="2007" name="Biochem. Biophys. Res. Commun.">
        <title>Chemerin--a new adipokine that modulates adipogenesis via its own receptor.</title>
        <authorList>
            <person name="Roh S.G."/>
            <person name="Song S.H."/>
            <person name="Choi K.C."/>
            <person name="Katoh K."/>
            <person name="Wittamer V."/>
            <person name="Parmentier M."/>
            <person name="Sasaki S."/>
        </authorList>
    </citation>
    <scope>TISSUE SPECIFICITY</scope>
</reference>
<reference key="5">
    <citation type="journal article" date="2007" name="J. Biol. Chem.">
        <title>Chemerin, a novel adipokine that regulates adipogenesis and adipocyte metabolism.</title>
        <authorList>
            <person name="Goralski K.B."/>
            <person name="McCarthy T.C."/>
            <person name="Hanniman E.A."/>
            <person name="Zabel B.A."/>
            <person name="Butcher E.C."/>
            <person name="Parlee S.D."/>
            <person name="Muruganandan S."/>
            <person name="Sinal C.J."/>
        </authorList>
    </citation>
    <scope>FUNCTION</scope>
    <scope>TISSUE SPECIFICITY</scope>
</reference>
<reference key="6">
    <citation type="journal article" date="2008" name="FEBS Lett.">
        <title>Chemerin enhances insulin signaling and potentiates insulin-stimulated glucose uptake in 3T3-L1 adipocytes.</title>
        <authorList>
            <person name="Takahashi M."/>
            <person name="Takahashi Y."/>
            <person name="Takahashi K."/>
            <person name="Zolotaryov F.N."/>
            <person name="Hong K.S."/>
            <person name="Kitazawa R."/>
            <person name="Iida K."/>
            <person name="Okimura Y."/>
            <person name="Kaji H."/>
            <person name="Kitazawa S."/>
            <person name="Kasuga M."/>
            <person name="Chihara K."/>
        </authorList>
    </citation>
    <scope>TISSUE SPECIFICITY</scope>
</reference>
<reference key="7">
    <citation type="journal article" date="2009" name="J. Immunol.">
        <title>Mouse ChemR23 is expressed in dendritic cell subsets and macrophages, and mediates an anti-inflammatory activity of chemerin in a lung disease model.</title>
        <authorList>
            <person name="Luangsay S."/>
            <person name="Wittamer V."/>
            <person name="Bondue B."/>
            <person name="De Henau O."/>
            <person name="Rouger L."/>
            <person name="Brait M."/>
            <person name="Franssen J.D."/>
            <person name="de Nadai P."/>
            <person name="Huaux F."/>
            <person name="Parmentier M."/>
        </authorList>
    </citation>
    <scope>TISSUE SPECIFICITY</scope>
</reference>
<reference key="8">
    <citation type="journal article" date="2010" name="Cell">
        <title>A tissue-specific atlas of mouse protein phosphorylation and expression.</title>
        <authorList>
            <person name="Huttlin E.L."/>
            <person name="Jedrychowski M.P."/>
            <person name="Elias J.E."/>
            <person name="Goswami T."/>
            <person name="Rad R."/>
            <person name="Beausoleil S.A."/>
            <person name="Villen J."/>
            <person name="Haas W."/>
            <person name="Sowa M.E."/>
            <person name="Gygi S.P."/>
        </authorList>
    </citation>
    <scope>PHOSPHORYLATION [LARGE SCALE ANALYSIS] AT SER-337; THR-340; SER-347; SER-350 AND THR-370</scope>
    <scope>IDENTIFICATION BY MASS SPECTROMETRY [LARGE SCALE ANALYSIS]</scope>
    <source>
        <tissue>Brain</tissue>
        <tissue>Brown adipose tissue</tissue>
        <tissue>Heart</tissue>
        <tissue>Kidney</tissue>
        <tissue>Liver</tissue>
        <tissue>Lung</tissue>
        <tissue>Spleen</tissue>
    </source>
</reference>
<proteinExistence type="evidence at protein level"/>
<organism>
    <name type="scientific">Mus musculus</name>
    <name type="common">Mouse</name>
    <dbReference type="NCBI Taxonomy" id="10090"/>
    <lineage>
        <taxon>Eukaryota</taxon>
        <taxon>Metazoa</taxon>
        <taxon>Chordata</taxon>
        <taxon>Craniata</taxon>
        <taxon>Vertebrata</taxon>
        <taxon>Euteleostomi</taxon>
        <taxon>Mammalia</taxon>
        <taxon>Eutheria</taxon>
        <taxon>Euarchontoglires</taxon>
        <taxon>Glires</taxon>
        <taxon>Rodentia</taxon>
        <taxon>Myomorpha</taxon>
        <taxon>Muroidea</taxon>
        <taxon>Muridae</taxon>
        <taxon>Murinae</taxon>
        <taxon>Mus</taxon>
        <taxon>Mus</taxon>
    </lineage>
</organism>
<evidence type="ECO:0000250" key="1"/>
<evidence type="ECO:0000250" key="2">
    <source>
        <dbReference type="UniProtKB" id="O35786"/>
    </source>
</evidence>
<evidence type="ECO:0000255" key="3"/>
<evidence type="ECO:0000255" key="4">
    <source>
        <dbReference type="PROSITE-ProRule" id="PRU00521"/>
    </source>
</evidence>
<evidence type="ECO:0000269" key="5">
    <source>
    </source>
</evidence>
<evidence type="ECO:0000269" key="6">
    <source>
    </source>
</evidence>
<evidence type="ECO:0000269" key="7">
    <source>
    </source>
</evidence>
<evidence type="ECO:0000269" key="8">
    <source>
    </source>
</evidence>
<evidence type="ECO:0000269" key="9">
    <source>
    </source>
</evidence>
<evidence type="ECO:0000269" key="10">
    <source>
    </source>
</evidence>
<evidence type="ECO:0000269" key="11">
    <source>
    </source>
</evidence>
<evidence type="ECO:0000305" key="12"/>
<evidence type="ECO:0007744" key="13">
    <source>
    </source>
</evidence>
<name>CML1_MOUSE</name>
<protein>
    <recommendedName>
        <fullName>Chemerin-like receptor 1</fullName>
    </recommendedName>
    <alternativeName>
        <fullName>Chemokine-like receptor 1</fullName>
    </alternativeName>
    <alternativeName>
        <fullName>G-protein coupled receptor DEZ</fullName>
    </alternativeName>
</protein>
<accession>P97468</accession>